<dbReference type="EC" id="2.3.1.35" evidence="1"/>
<dbReference type="EC" id="2.3.1.1" evidence="1"/>
<dbReference type="EMBL" id="GG698900">
    <property type="protein sequence ID" value="EEU44773.1"/>
    <property type="molecule type" value="Genomic_DNA"/>
</dbReference>
<dbReference type="RefSeq" id="XP_003050486.1">
    <property type="nucleotide sequence ID" value="XM_003050440.1"/>
</dbReference>
<dbReference type="SMR" id="C7YUB3"/>
<dbReference type="FunCoup" id="C7YUB3">
    <property type="interactions" value="342"/>
</dbReference>
<dbReference type="STRING" id="660122.C7YUB3"/>
<dbReference type="MEROPS" id="T05.001"/>
<dbReference type="EnsemblFungi" id="NechaT96275">
    <property type="protein sequence ID" value="NechaP96275"/>
    <property type="gene ID" value="NechaG96275"/>
</dbReference>
<dbReference type="GeneID" id="9674881"/>
<dbReference type="KEGG" id="nhe:NECHADRAFT_96275"/>
<dbReference type="VEuPathDB" id="FungiDB:NECHADRAFT_96275"/>
<dbReference type="eggNOG" id="KOG2786">
    <property type="taxonomic scope" value="Eukaryota"/>
</dbReference>
<dbReference type="HOGENOM" id="CLU_027172_1_0_1"/>
<dbReference type="InParanoid" id="C7YUB3"/>
<dbReference type="OMA" id="WGRIVMA"/>
<dbReference type="OrthoDB" id="4199794at2759"/>
<dbReference type="UniPathway" id="UPA00068">
    <property type="reaction ID" value="UER00106"/>
</dbReference>
<dbReference type="UniPathway" id="UPA00068">
    <property type="reaction ID" value="UER00111"/>
</dbReference>
<dbReference type="Proteomes" id="UP000005206">
    <property type="component" value="Unassembled WGS sequence"/>
</dbReference>
<dbReference type="GO" id="GO:0005759">
    <property type="term" value="C:mitochondrial matrix"/>
    <property type="evidence" value="ECO:0007669"/>
    <property type="project" value="UniProtKB-SubCell"/>
</dbReference>
<dbReference type="GO" id="GO:0004358">
    <property type="term" value="F:glutamate N-acetyltransferase activity"/>
    <property type="evidence" value="ECO:0007669"/>
    <property type="project" value="UniProtKB-UniRule"/>
</dbReference>
<dbReference type="GO" id="GO:0004042">
    <property type="term" value="F:L-glutamate N-acetyltransferase activity"/>
    <property type="evidence" value="ECO:0007669"/>
    <property type="project" value="UniProtKB-UniRule"/>
</dbReference>
<dbReference type="GO" id="GO:0006526">
    <property type="term" value="P:L-arginine biosynthetic process"/>
    <property type="evidence" value="ECO:0007669"/>
    <property type="project" value="UniProtKB-UniRule"/>
</dbReference>
<dbReference type="GO" id="GO:0006592">
    <property type="term" value="P:ornithine biosynthetic process"/>
    <property type="evidence" value="ECO:0007669"/>
    <property type="project" value="EnsemblFungi"/>
</dbReference>
<dbReference type="CDD" id="cd02152">
    <property type="entry name" value="OAT"/>
    <property type="match status" value="1"/>
</dbReference>
<dbReference type="FunFam" id="3.60.70.12:FF:000001">
    <property type="entry name" value="Arginine biosynthesis bifunctional protein ArgJ, chloroplastic"/>
    <property type="match status" value="1"/>
</dbReference>
<dbReference type="FunFam" id="3.10.20.340:FF:000002">
    <property type="entry name" value="Arginine biosynthesis bifunctional protein ArgJ, mitochondrial"/>
    <property type="match status" value="1"/>
</dbReference>
<dbReference type="FunFam" id="3.30.2330.10:FF:000001">
    <property type="entry name" value="Arginine biosynthesis bifunctional protein ArgJ, mitochondrial"/>
    <property type="match status" value="1"/>
</dbReference>
<dbReference type="Gene3D" id="3.30.2330.10">
    <property type="entry name" value="arginine biosynthesis bifunctional protein suprefamily"/>
    <property type="match status" value="1"/>
</dbReference>
<dbReference type="Gene3D" id="3.10.20.340">
    <property type="entry name" value="ArgJ beta chain, C-terminal domain"/>
    <property type="match status" value="1"/>
</dbReference>
<dbReference type="Gene3D" id="3.60.70.12">
    <property type="entry name" value="L-amino peptidase D-ALA esterase/amidase"/>
    <property type="match status" value="1"/>
</dbReference>
<dbReference type="HAMAP" id="MF_01106">
    <property type="entry name" value="ArgJ"/>
    <property type="match status" value="1"/>
</dbReference>
<dbReference type="InterPro" id="IPR002813">
    <property type="entry name" value="Arg_biosynth_ArgJ"/>
</dbReference>
<dbReference type="InterPro" id="IPR016117">
    <property type="entry name" value="ArgJ-like_dom_sf"/>
</dbReference>
<dbReference type="InterPro" id="IPR042195">
    <property type="entry name" value="ArgJ_beta_C"/>
</dbReference>
<dbReference type="NCBIfam" id="TIGR00120">
    <property type="entry name" value="ArgJ"/>
    <property type="match status" value="1"/>
</dbReference>
<dbReference type="NCBIfam" id="NF003802">
    <property type="entry name" value="PRK05388.1"/>
    <property type="match status" value="1"/>
</dbReference>
<dbReference type="PANTHER" id="PTHR23100">
    <property type="entry name" value="ARGININE BIOSYNTHESIS BIFUNCTIONAL PROTEIN ARGJ"/>
    <property type="match status" value="1"/>
</dbReference>
<dbReference type="PANTHER" id="PTHR23100:SF0">
    <property type="entry name" value="ARGININE BIOSYNTHESIS BIFUNCTIONAL PROTEIN ARGJ, MITOCHONDRIAL"/>
    <property type="match status" value="1"/>
</dbReference>
<dbReference type="Pfam" id="PF01960">
    <property type="entry name" value="ArgJ"/>
    <property type="match status" value="1"/>
</dbReference>
<dbReference type="SUPFAM" id="SSF56266">
    <property type="entry name" value="DmpA/ArgJ-like"/>
    <property type="match status" value="1"/>
</dbReference>
<accession>C7YUB3</accession>
<protein>
    <recommendedName>
        <fullName evidence="1">Arginine biosynthesis bifunctional protein ArgJ, mitochondrial</fullName>
    </recommendedName>
    <domain>
        <recommendedName>
            <fullName evidence="1">Glutamate N-acetyltransferase</fullName>
            <shortName evidence="1">GAT</shortName>
            <ecNumber evidence="1">2.3.1.35</ecNumber>
        </recommendedName>
        <alternativeName>
            <fullName evidence="1">Ornithine acetyltransferase</fullName>
            <shortName evidence="1">OATase</shortName>
        </alternativeName>
        <alternativeName>
            <fullName evidence="1">Ornithine transacetylase</fullName>
        </alternativeName>
    </domain>
    <domain>
        <recommendedName>
            <fullName evidence="1">Amino-acid acetyltransferase</fullName>
            <ecNumber evidence="1">2.3.1.1</ecNumber>
        </recommendedName>
        <alternativeName>
            <fullName evidence="1">N-acetylglutamate synthase</fullName>
            <shortName evidence="1">AGS</shortName>
        </alternativeName>
    </domain>
    <component>
        <recommendedName>
            <fullName evidence="1">Arginine biosynthesis bifunctional protein ArgJ alpha chain</fullName>
        </recommendedName>
    </component>
    <component>
        <recommendedName>
            <fullName evidence="1">Arginine biosynthesis bifunctional protein ArgJ beta chain</fullName>
        </recommendedName>
    </component>
</protein>
<comment type="function">
    <text evidence="1">Catalyzes two activities which are involved in the cyclic version of arginine biosynthesis: the synthesis of acetylglutamate from glutamate and acetyl-CoA, and of ornithine by transacetylation between acetylornithine and glutamate.</text>
</comment>
<comment type="catalytic activity">
    <reaction evidence="1">
        <text>N(2)-acetyl-L-ornithine + L-glutamate = N-acetyl-L-glutamate + L-ornithine</text>
        <dbReference type="Rhea" id="RHEA:15349"/>
        <dbReference type="ChEBI" id="CHEBI:29985"/>
        <dbReference type="ChEBI" id="CHEBI:44337"/>
        <dbReference type="ChEBI" id="CHEBI:46911"/>
        <dbReference type="ChEBI" id="CHEBI:57805"/>
        <dbReference type="EC" id="2.3.1.35"/>
    </reaction>
</comment>
<comment type="catalytic activity">
    <reaction evidence="1">
        <text>L-glutamate + acetyl-CoA = N-acetyl-L-glutamate + CoA + H(+)</text>
        <dbReference type="Rhea" id="RHEA:24292"/>
        <dbReference type="ChEBI" id="CHEBI:15378"/>
        <dbReference type="ChEBI" id="CHEBI:29985"/>
        <dbReference type="ChEBI" id="CHEBI:44337"/>
        <dbReference type="ChEBI" id="CHEBI:57287"/>
        <dbReference type="ChEBI" id="CHEBI:57288"/>
        <dbReference type="EC" id="2.3.1.1"/>
    </reaction>
</comment>
<comment type="pathway">
    <text evidence="1">Amino-acid biosynthesis; L-arginine biosynthesis; L-ornithine and N-acetyl-L-glutamate from L-glutamate and N(2)-acetyl-L-ornithine (cyclic): step 1/1.</text>
</comment>
<comment type="pathway">
    <text evidence="1">Amino-acid biosynthesis; L-arginine biosynthesis; N(2)-acetyl-L-ornithine from L-glutamate: step 1/4.</text>
</comment>
<comment type="subunit">
    <text evidence="1">Heterodimer of an alpha and a beta chain.</text>
</comment>
<comment type="subcellular location">
    <subcellularLocation>
        <location evidence="1">Mitochondrion matrix</location>
    </subcellularLocation>
</comment>
<comment type="PTM">
    <text evidence="1">The alpha and beta chains are autoproteolytically processed from a single precursor protein within the mitochondrion.</text>
</comment>
<comment type="miscellaneous">
    <text evidence="1">This protein may be expected to contain an N-terminal transit peptide but none has been predicted.</text>
</comment>
<comment type="similarity">
    <text evidence="1">Belongs to the ArgJ family.</text>
</comment>
<evidence type="ECO:0000255" key="1">
    <source>
        <dbReference type="HAMAP-Rule" id="MF_03124"/>
    </source>
</evidence>
<gene>
    <name type="ORF">NECHADRAFT_96275</name>
</gene>
<organism>
    <name type="scientific">Fusarium vanettenii (strain ATCC MYA-4622 / CBS 123669 / FGSC 9596 / NRRL 45880 / 77-13-4)</name>
    <name type="common">Fusarium solani subsp. pisi</name>
    <dbReference type="NCBI Taxonomy" id="660122"/>
    <lineage>
        <taxon>Eukaryota</taxon>
        <taxon>Fungi</taxon>
        <taxon>Dikarya</taxon>
        <taxon>Ascomycota</taxon>
        <taxon>Pezizomycotina</taxon>
        <taxon>Sordariomycetes</taxon>
        <taxon>Hypocreomycetidae</taxon>
        <taxon>Hypocreales</taxon>
        <taxon>Nectriaceae</taxon>
        <taxon>Fusarium</taxon>
        <taxon>Fusarium solani species complex</taxon>
        <taxon>Fusarium vanettenii</taxon>
    </lineage>
</organism>
<proteinExistence type="inferred from homology"/>
<sequence length="451" mass="47879">MKRFTRAYSSATTTLGAAPIPASKIKYIPSTGTYPKGFVASGVFVGVKPGNTSKPDLAIISSDRPCAAAGVFTKNKFQAAPVTFSRKLLQQKKNAGLRSVVINSGNANAVTGTGGLEDATNMARTTDQRVGDEDSTLVMSTGVIGQRLPIQKIVDHIPMAYHKAGDSHSHWLNCAKAICTTDTFPKLMSRTFELPSSPGVEYRIAGLTKGAGMIAPNMATLLTVLATDAPIAPAVMPNVLRHAVDRSFNAITIDGDSSTNDTVALLANGAAGGKEIASEQSPDFEAFQGLLTEFSADLAKYIVRDGEGATKFVTIRVVDSATEEAARQVARSIATSPLVKTALYGKDANWGRILCAAGYALISPPGQPINDVPEIVPERTNVSFVPTDGSTELKLLVDGEPEQVNEERASEILAMEDLEIVVRLGTGDKSAVHWTCDFSHDYVTINGDYRT</sequence>
<name>ARGJ_FUSV7</name>
<keyword id="KW-0012">Acyltransferase</keyword>
<keyword id="KW-0028">Amino-acid biosynthesis</keyword>
<keyword id="KW-0055">Arginine biosynthesis</keyword>
<keyword id="KW-0068">Autocatalytic cleavage</keyword>
<keyword id="KW-0496">Mitochondrion</keyword>
<keyword id="KW-0511">Multifunctional enzyme</keyword>
<keyword id="KW-1185">Reference proteome</keyword>
<keyword id="KW-0808">Transferase</keyword>
<reference key="1">
    <citation type="journal article" date="2009" name="PLoS Genet.">
        <title>The genome of Nectria haematococca: contribution of supernumerary chromosomes to gene expansion.</title>
        <authorList>
            <person name="Coleman J.J."/>
            <person name="Rounsley S.D."/>
            <person name="Rodriguez-Carres M."/>
            <person name="Kuo A."/>
            <person name="Wasmann C.C."/>
            <person name="Grimwood J."/>
            <person name="Schmutz J."/>
            <person name="Taga M."/>
            <person name="White G.J."/>
            <person name="Zhou S."/>
            <person name="Schwartz D.C."/>
            <person name="Freitag M."/>
            <person name="Ma L.-J."/>
            <person name="Danchin E.G.J."/>
            <person name="Henrissat B."/>
            <person name="Coutinho P.M."/>
            <person name="Nelson D.R."/>
            <person name="Straney D."/>
            <person name="Napoli C.A."/>
            <person name="Barker B.M."/>
            <person name="Gribskov M."/>
            <person name="Rep M."/>
            <person name="Kroken S."/>
            <person name="Molnar I."/>
            <person name="Rensing C."/>
            <person name="Kennell J.C."/>
            <person name="Zamora J."/>
            <person name="Farman M.L."/>
            <person name="Selker E.U."/>
            <person name="Salamov A."/>
            <person name="Shapiro H."/>
            <person name="Pangilinan J."/>
            <person name="Lindquist E."/>
            <person name="Lamers C."/>
            <person name="Grigoriev I.V."/>
            <person name="Geiser D.M."/>
            <person name="Covert S.F."/>
            <person name="Temporini E."/>
            <person name="VanEtten H.D."/>
        </authorList>
    </citation>
    <scope>NUCLEOTIDE SEQUENCE [LARGE SCALE GENOMIC DNA]</scope>
    <source>
        <strain>ATCC MYA-4622 / CBS 123669 / FGSC 9596 / NRRL 45880 / 77-13-4</strain>
    </source>
</reference>
<feature type="chain" id="PRO_0000398068" description="Arginine biosynthesis bifunctional protein ArgJ alpha chain" evidence="1">
    <location>
        <begin position="1"/>
        <end position="219"/>
    </location>
</feature>
<feature type="chain" id="PRO_0000398069" description="Arginine biosynthesis bifunctional protein ArgJ beta chain" evidence="1">
    <location>
        <begin position="220"/>
        <end position="451"/>
    </location>
</feature>
<feature type="active site" description="Nucleophile" evidence="1">
    <location>
        <position position="220"/>
    </location>
</feature>
<feature type="binding site" evidence="1">
    <location>
        <position position="180"/>
    </location>
    <ligand>
        <name>substrate</name>
    </ligand>
</feature>
<feature type="binding site" evidence="1">
    <location>
        <position position="209"/>
    </location>
    <ligand>
        <name>substrate</name>
    </ligand>
</feature>
<feature type="binding site" evidence="1">
    <location>
        <position position="220"/>
    </location>
    <ligand>
        <name>substrate</name>
    </ligand>
</feature>
<feature type="binding site" evidence="1">
    <location>
        <position position="307"/>
    </location>
    <ligand>
        <name>substrate</name>
    </ligand>
</feature>
<feature type="binding site" evidence="1">
    <location>
        <position position="446"/>
    </location>
    <ligand>
        <name>substrate</name>
    </ligand>
</feature>
<feature type="binding site" evidence="1">
    <location>
        <position position="451"/>
    </location>
    <ligand>
        <name>substrate</name>
    </ligand>
</feature>
<feature type="site" description="Involved in the stabilization of negative charge on the oxyanion by the formation of the oxyanion hole" evidence="1">
    <location>
        <position position="141"/>
    </location>
</feature>
<feature type="site" description="Involved in the stabilization of negative charge on the oxyanion by the formation of the oxyanion hole" evidence="1">
    <location>
        <position position="142"/>
    </location>
</feature>
<feature type="site" description="Cleavage; by autolysis" evidence="1">
    <location>
        <begin position="219"/>
        <end position="220"/>
    </location>
</feature>